<evidence type="ECO:0000255" key="1">
    <source>
        <dbReference type="HAMAP-Rule" id="MF_01165"/>
    </source>
</evidence>
<organism>
    <name type="scientific">Shigella sonnei (strain Ss046)</name>
    <dbReference type="NCBI Taxonomy" id="300269"/>
    <lineage>
        <taxon>Bacteria</taxon>
        <taxon>Pseudomonadati</taxon>
        <taxon>Pseudomonadota</taxon>
        <taxon>Gammaproteobacteria</taxon>
        <taxon>Enterobacterales</taxon>
        <taxon>Enterobacteriaceae</taxon>
        <taxon>Shigella</taxon>
    </lineage>
</organism>
<dbReference type="EC" id="2.4.2.43" evidence="1"/>
<dbReference type="EMBL" id="CP000038">
    <property type="protein sequence ID" value="AAZ88963.1"/>
    <property type="molecule type" value="Genomic_DNA"/>
</dbReference>
<dbReference type="RefSeq" id="WP_000844043.1">
    <property type="nucleotide sequence ID" value="NC_007384.1"/>
</dbReference>
<dbReference type="SMR" id="Q3YZU9"/>
<dbReference type="CAZy" id="GT83">
    <property type="family name" value="Glycosyltransferase Family 83"/>
</dbReference>
<dbReference type="GeneID" id="93774917"/>
<dbReference type="KEGG" id="ssn:SSON_2318"/>
<dbReference type="HOGENOM" id="CLU_019200_2_1_6"/>
<dbReference type="UniPathway" id="UPA00037"/>
<dbReference type="Proteomes" id="UP000002529">
    <property type="component" value="Chromosome"/>
</dbReference>
<dbReference type="GO" id="GO:0005886">
    <property type="term" value="C:plasma membrane"/>
    <property type="evidence" value="ECO:0007669"/>
    <property type="project" value="UniProtKB-SubCell"/>
</dbReference>
<dbReference type="GO" id="GO:0103015">
    <property type="term" value="F:4-amino-4-deoxy-L-arabinose transferase activity"/>
    <property type="evidence" value="ECO:0007669"/>
    <property type="project" value="UniProtKB-EC"/>
</dbReference>
<dbReference type="GO" id="GO:0000030">
    <property type="term" value="F:mannosyltransferase activity"/>
    <property type="evidence" value="ECO:0007669"/>
    <property type="project" value="InterPro"/>
</dbReference>
<dbReference type="GO" id="GO:0009245">
    <property type="term" value="P:lipid A biosynthetic process"/>
    <property type="evidence" value="ECO:0007669"/>
    <property type="project" value="UniProtKB-UniRule"/>
</dbReference>
<dbReference type="GO" id="GO:0009103">
    <property type="term" value="P:lipopolysaccharide biosynthetic process"/>
    <property type="evidence" value="ECO:0007669"/>
    <property type="project" value="UniProtKB-KW"/>
</dbReference>
<dbReference type="GO" id="GO:0006493">
    <property type="term" value="P:protein O-linked glycosylation"/>
    <property type="evidence" value="ECO:0007669"/>
    <property type="project" value="InterPro"/>
</dbReference>
<dbReference type="GO" id="GO:0010041">
    <property type="term" value="P:response to iron(III) ion"/>
    <property type="evidence" value="ECO:0007669"/>
    <property type="project" value="TreeGrafter"/>
</dbReference>
<dbReference type="HAMAP" id="MF_01165">
    <property type="entry name" value="ArnT_transfer"/>
    <property type="match status" value="1"/>
</dbReference>
<dbReference type="InterPro" id="IPR022839">
    <property type="entry name" value="ArnT_tfrase"/>
</dbReference>
<dbReference type="InterPro" id="IPR003342">
    <property type="entry name" value="Glyco_trans_39/83"/>
</dbReference>
<dbReference type="InterPro" id="IPR050297">
    <property type="entry name" value="LipidA_mod_glycosyltrf_83"/>
</dbReference>
<dbReference type="NCBIfam" id="NF009784">
    <property type="entry name" value="PRK13279.1"/>
    <property type="match status" value="1"/>
</dbReference>
<dbReference type="PANTHER" id="PTHR33908">
    <property type="entry name" value="MANNOSYLTRANSFERASE YKCB-RELATED"/>
    <property type="match status" value="1"/>
</dbReference>
<dbReference type="PANTHER" id="PTHR33908:SF3">
    <property type="entry name" value="UNDECAPRENYL PHOSPHATE-ALPHA-4-AMINO-4-DEOXY-L-ARABINOSE ARABINOSYL TRANSFERASE"/>
    <property type="match status" value="1"/>
</dbReference>
<dbReference type="Pfam" id="PF02366">
    <property type="entry name" value="PMT"/>
    <property type="match status" value="1"/>
</dbReference>
<sequence length="550" mass="62582">MKSVRYLIGLFAFIACYYLLPISTRLLWQPDETRYAEISREMLASGDWIVPHLLGLRYFEKPIAGYWINSIGQWLFGANNFGVRAGVIFATLLTAALVTWFTLRLWRDKRLALLATVIYLSLFIVYAIGTYAVLDPFIAFWLVAGMCSFWLAMQAQTWKGKSAGFLLLGITCGMGVMTKGFLALAVPVLSVLPWVATQKRWKDLFIYGWLAVISCVLTVLPWGLAIAQREPDFWHYFFWVEHIQRFALDDAQHRAPFWYYVPVIIAGSLPWLGLLPGALYTGWKNRKHSATVYLLSWTIMPLLFFSVAKGKLPTYILSCFASLAMLMAHYALLAAKNNPLALRINGWINIAFGFTGIIATFVVSPWGPMNTPVWQTFESYKVFCAWSIFSLWAFFGWYTLTNVEKTWSFAALCPLGLALLVGFSIPDRVMEGKHPQFFVEMTQESLQPSRYILTDSVGVAAGLAWSLQRDDIIMYRQTGELKYGLNYPDAKGRFVSGDEFANWLNQHRQEGIITLVLSVDRDEDINSLAIPPADAIDRQERLVLIQYRPK</sequence>
<name>ARNT_SHISS</name>
<protein>
    <recommendedName>
        <fullName evidence="1">Undecaprenyl phosphate-alpha-4-amino-4-deoxy-L-arabinose arabinosyl transferase</fullName>
        <ecNumber evidence="1">2.4.2.43</ecNumber>
    </recommendedName>
    <alternativeName>
        <fullName evidence="1">4-amino-4-deoxy-L-arabinose lipid A transferase</fullName>
    </alternativeName>
    <alternativeName>
        <fullName evidence="1">Lipid IV(A) 4-amino-4-deoxy-L-arabinosyltransferase</fullName>
    </alternativeName>
    <alternativeName>
        <fullName evidence="1">Undecaprenyl phosphate-alpha-L-Ara4N transferase</fullName>
    </alternativeName>
</protein>
<feature type="chain" id="PRO_0000380040" description="Undecaprenyl phosphate-alpha-4-amino-4-deoxy-L-arabinose arabinosyl transferase">
    <location>
        <begin position="1"/>
        <end position="550"/>
    </location>
</feature>
<feature type="transmembrane region" description="Helical" evidence="1">
    <location>
        <begin position="7"/>
        <end position="27"/>
    </location>
</feature>
<feature type="transmembrane region" description="Helical" evidence="1">
    <location>
        <begin position="81"/>
        <end position="101"/>
    </location>
</feature>
<feature type="transmembrane region" description="Helical" evidence="1">
    <location>
        <begin position="111"/>
        <end position="133"/>
    </location>
</feature>
<feature type="transmembrane region" description="Helical" evidence="1">
    <location>
        <begin position="137"/>
        <end position="154"/>
    </location>
</feature>
<feature type="transmembrane region" description="Helical" evidence="1">
    <location>
        <begin position="165"/>
        <end position="185"/>
    </location>
</feature>
<feature type="transmembrane region" description="Helical" evidence="1">
    <location>
        <begin position="204"/>
        <end position="224"/>
    </location>
</feature>
<feature type="transmembrane region" description="Helical" evidence="1">
    <location>
        <begin position="255"/>
        <end position="275"/>
    </location>
</feature>
<feature type="transmembrane region" description="Helical" evidence="1">
    <location>
        <begin position="288"/>
        <end position="308"/>
    </location>
</feature>
<feature type="transmembrane region" description="Helical" evidence="1">
    <location>
        <begin position="315"/>
        <end position="335"/>
    </location>
</feature>
<feature type="transmembrane region" description="Helical" evidence="1">
    <location>
        <begin position="346"/>
        <end position="366"/>
    </location>
</feature>
<feature type="transmembrane region" description="Helical" evidence="1">
    <location>
        <begin position="382"/>
        <end position="402"/>
    </location>
</feature>
<feature type="transmembrane region" description="Helical" evidence="1">
    <location>
        <begin position="406"/>
        <end position="426"/>
    </location>
</feature>
<proteinExistence type="inferred from homology"/>
<comment type="function">
    <text evidence="1">Catalyzes the transfer of the L-Ara4N moiety of the glycolipid undecaprenyl phosphate-alpha-L-Ara4N to lipid A. The modified arabinose is attached to lipid A and is required for resistance to polymyxin and cationic antimicrobial peptides.</text>
</comment>
<comment type="catalytic activity">
    <reaction evidence="1">
        <text>4-amino-4-deoxy-alpha-L-arabinopyranosyl di-trans,octa-cis-undecaprenyl phosphate + lipid IVA = lipid IIA + di-trans,octa-cis-undecaprenyl phosphate.</text>
        <dbReference type="EC" id="2.4.2.43"/>
    </reaction>
</comment>
<comment type="pathway">
    <text evidence="1">Lipopolysaccharide metabolism; 4-amino-4-deoxy-beta-L-arabinose-lipid A biosynthesis.</text>
</comment>
<comment type="subcellular location">
    <subcellularLocation>
        <location evidence="1">Cell inner membrane</location>
        <topology evidence="1">Multi-pass membrane protein</topology>
    </subcellularLocation>
</comment>
<comment type="similarity">
    <text evidence="1">Belongs to the glycosyltransferase 83 family.</text>
</comment>
<accession>Q3YZU9</accession>
<gene>
    <name evidence="1" type="primary">arnT</name>
    <name type="ordered locus">SSON_2318</name>
</gene>
<keyword id="KW-0997">Cell inner membrane</keyword>
<keyword id="KW-1003">Cell membrane</keyword>
<keyword id="KW-0328">Glycosyltransferase</keyword>
<keyword id="KW-0441">Lipid A biosynthesis</keyword>
<keyword id="KW-0444">Lipid biosynthesis</keyword>
<keyword id="KW-0443">Lipid metabolism</keyword>
<keyword id="KW-0448">Lipopolysaccharide biosynthesis</keyword>
<keyword id="KW-0472">Membrane</keyword>
<keyword id="KW-1185">Reference proteome</keyword>
<keyword id="KW-0808">Transferase</keyword>
<keyword id="KW-0812">Transmembrane</keyword>
<keyword id="KW-1133">Transmembrane helix</keyword>
<reference key="1">
    <citation type="journal article" date="2005" name="Nucleic Acids Res.">
        <title>Genome dynamics and diversity of Shigella species, the etiologic agents of bacillary dysentery.</title>
        <authorList>
            <person name="Yang F."/>
            <person name="Yang J."/>
            <person name="Zhang X."/>
            <person name="Chen L."/>
            <person name="Jiang Y."/>
            <person name="Yan Y."/>
            <person name="Tang X."/>
            <person name="Wang J."/>
            <person name="Xiong Z."/>
            <person name="Dong J."/>
            <person name="Xue Y."/>
            <person name="Zhu Y."/>
            <person name="Xu X."/>
            <person name="Sun L."/>
            <person name="Chen S."/>
            <person name="Nie H."/>
            <person name="Peng J."/>
            <person name="Xu J."/>
            <person name="Wang Y."/>
            <person name="Yuan Z."/>
            <person name="Wen Y."/>
            <person name="Yao Z."/>
            <person name="Shen Y."/>
            <person name="Qiang B."/>
            <person name="Hou Y."/>
            <person name="Yu J."/>
            <person name="Jin Q."/>
        </authorList>
    </citation>
    <scope>NUCLEOTIDE SEQUENCE [LARGE SCALE GENOMIC DNA]</scope>
    <source>
        <strain>Ss046</strain>
    </source>
</reference>